<reference key="1">
    <citation type="journal article" date="2009" name="Proc. Natl. Acad. Sci. U.S.A.">
        <title>Eukaryote-to-eukaryote gene transfer events revealed by the genome sequence of the wine yeast Saccharomyces cerevisiae EC1118.</title>
        <authorList>
            <person name="Novo M."/>
            <person name="Bigey F."/>
            <person name="Beyne E."/>
            <person name="Galeote V."/>
            <person name="Gavory F."/>
            <person name="Mallet S."/>
            <person name="Cambon B."/>
            <person name="Legras J.-L."/>
            <person name="Wincker P."/>
            <person name="Casaregola S."/>
            <person name="Dequin S."/>
        </authorList>
    </citation>
    <scope>NUCLEOTIDE SEQUENCE [LARGE SCALE GENOMIC DNA]</scope>
    <source>
        <strain>Lalvin EC1118 / Prise de mousse</strain>
    </source>
</reference>
<keyword id="KW-0175">Coiled coil</keyword>
<keyword id="KW-0963">Cytoplasm</keyword>
<keyword id="KW-0597">Phosphoprotein</keyword>
<name>TDA11_YEAS8</name>
<sequence length="504" mass="56284">MNKFDEFIESNEKDLDVDTSTRNSIISMSPVRKTGRKIRSASSNGYRLEHHRTSSAGSMHSQRLMTPTRLNDQDHPLQAKPDARRVVTRHSSVSVPNAMSKRRSLIQPMVVPTTPESQNNLPSVSHSEGSYGIPLESTTVLSSEQAMASGLRRSRNGSSQSVNSMIATTIPTNGVDVSALLQSLATKELELLECKQKIEDLKKQTQHEEQNYTRRARELHELKEQVSKHLDPSLNTPVKNRAFSPVYQNIPLESRTENAGNSSLPSSVSKPKNMGHQSTNQSRSVSPQDIQERRQRDDSSDSSKQSLWSKPLALFNQFDKIIQHEIERTLNWDDSLSGTPEVQEGTPTSNSESSAQQYDNEAPGARQKSPSQGSVSRSLWSFVSDVKAGLLGIEEENDNDVITDNRCDPVYKSDRQHEQKKSTHKITNRGQAEDSGDDSSLNTRKFKTTTKFQKDNAGNNSLTDESGHRTREKKSKRSSNKLSFIGEPDNDNSSVKNSVEMTDF</sequence>
<accession>C8Z9V6</accession>
<feature type="chain" id="PRO_0000410765" description="Topoisomerase I damage affected protein 11">
    <location>
        <begin position="1"/>
        <end position="504"/>
    </location>
</feature>
<feature type="region of interest" description="Disordered" evidence="4">
    <location>
        <begin position="32"/>
        <end position="62"/>
    </location>
</feature>
<feature type="region of interest" description="Disordered" evidence="4">
    <location>
        <begin position="252"/>
        <end position="306"/>
    </location>
</feature>
<feature type="region of interest" description="Disordered" evidence="4">
    <location>
        <begin position="332"/>
        <end position="377"/>
    </location>
</feature>
<feature type="region of interest" description="Disordered" evidence="4">
    <location>
        <begin position="400"/>
        <end position="504"/>
    </location>
</feature>
<feature type="coiled-coil region" evidence="3">
    <location>
        <begin position="179"/>
        <end position="231"/>
    </location>
</feature>
<feature type="compositionally biased region" description="Polar residues" evidence="4">
    <location>
        <begin position="257"/>
        <end position="287"/>
    </location>
</feature>
<feature type="compositionally biased region" description="Basic and acidic residues" evidence="4">
    <location>
        <begin position="290"/>
        <end position="301"/>
    </location>
</feature>
<feature type="compositionally biased region" description="Polar residues" evidence="4">
    <location>
        <begin position="332"/>
        <end position="359"/>
    </location>
</feature>
<feature type="compositionally biased region" description="Polar residues" evidence="4">
    <location>
        <begin position="368"/>
        <end position="377"/>
    </location>
</feature>
<feature type="compositionally biased region" description="Basic and acidic residues" evidence="4">
    <location>
        <begin position="403"/>
        <end position="421"/>
    </location>
</feature>
<feature type="compositionally biased region" description="Basic residues" evidence="4">
    <location>
        <begin position="470"/>
        <end position="479"/>
    </location>
</feature>
<feature type="compositionally biased region" description="Polar residues" evidence="4">
    <location>
        <begin position="491"/>
        <end position="504"/>
    </location>
</feature>
<feature type="modified residue" description="Phosphothreonine" evidence="2">
    <location>
        <position position="236"/>
    </location>
</feature>
<feature type="modified residue" description="Phosphoserine" evidence="2">
    <location>
        <position position="244"/>
    </location>
</feature>
<feature type="modified residue" description="Phosphoserine" evidence="2">
    <location>
        <position position="286"/>
    </location>
</feature>
<proteinExistence type="inferred from homology"/>
<protein>
    <recommendedName>
        <fullName>Topoisomerase I damage affected protein 11</fullName>
    </recommendedName>
</protein>
<dbReference type="EMBL" id="FN393071">
    <property type="protein sequence ID" value="CAY80172.1"/>
    <property type="molecule type" value="Genomic_DNA"/>
</dbReference>
<dbReference type="SMR" id="C8Z9V6"/>
<dbReference type="HOGENOM" id="CLU_046807_0_0_1"/>
<dbReference type="OrthoDB" id="7991at4893"/>
<dbReference type="Proteomes" id="UP000000286">
    <property type="component" value="Chromosome VIII, Scaffold EC1118_1H13"/>
</dbReference>
<dbReference type="GO" id="GO:0005737">
    <property type="term" value="C:cytoplasm"/>
    <property type="evidence" value="ECO:0007669"/>
    <property type="project" value="UniProtKB-SubCell"/>
</dbReference>
<dbReference type="InterPro" id="IPR031388">
    <property type="entry name" value="Tda11"/>
</dbReference>
<dbReference type="Pfam" id="PF17084">
    <property type="entry name" value="TDA11"/>
    <property type="match status" value="1"/>
</dbReference>
<evidence type="ECO:0000250" key="1"/>
<evidence type="ECO:0000250" key="2">
    <source>
        <dbReference type="UniProtKB" id="P38854"/>
    </source>
</evidence>
<evidence type="ECO:0000255" key="3"/>
<evidence type="ECO:0000256" key="4">
    <source>
        <dbReference type="SAM" id="MobiDB-lite"/>
    </source>
</evidence>
<evidence type="ECO:0000305" key="5"/>
<gene>
    <name type="primary">TDA11</name>
    <name type="ORF">EC1118_1H13_1343g</name>
</gene>
<comment type="subcellular location">
    <subcellularLocation>
        <location evidence="1">Cytoplasm</location>
    </subcellularLocation>
</comment>
<comment type="similarity">
    <text evidence="5">Belongs to the TDA11 family.</text>
</comment>
<organism>
    <name type="scientific">Saccharomyces cerevisiae (strain Lalvin EC1118 / Prise de mousse)</name>
    <name type="common">Baker's yeast</name>
    <dbReference type="NCBI Taxonomy" id="643680"/>
    <lineage>
        <taxon>Eukaryota</taxon>
        <taxon>Fungi</taxon>
        <taxon>Dikarya</taxon>
        <taxon>Ascomycota</taxon>
        <taxon>Saccharomycotina</taxon>
        <taxon>Saccharomycetes</taxon>
        <taxon>Saccharomycetales</taxon>
        <taxon>Saccharomycetaceae</taxon>
        <taxon>Saccharomyces</taxon>
    </lineage>
</organism>